<name>MNME_SYNSC</name>
<reference key="1">
    <citation type="submission" date="2005-07" db="EMBL/GenBank/DDBJ databases">
        <title>Complete sequence of Synechococcus sp. CC9605.</title>
        <authorList>
            <consortium name="US DOE Joint Genome Institute"/>
            <person name="Copeland A."/>
            <person name="Lucas S."/>
            <person name="Lapidus A."/>
            <person name="Barry K."/>
            <person name="Detter J.C."/>
            <person name="Glavina T."/>
            <person name="Hammon N."/>
            <person name="Israni S."/>
            <person name="Pitluck S."/>
            <person name="Schmutz J."/>
            <person name="Martinez M."/>
            <person name="Larimer F."/>
            <person name="Land M."/>
            <person name="Kyrpides N."/>
            <person name="Ivanova N."/>
            <person name="Richardson P."/>
        </authorList>
    </citation>
    <scope>NUCLEOTIDE SEQUENCE [LARGE SCALE GENOMIC DNA]</scope>
    <source>
        <strain>CC9605</strain>
    </source>
</reference>
<accession>Q3AGU7</accession>
<dbReference type="EC" id="3.6.-.-" evidence="1"/>
<dbReference type="EMBL" id="CP000110">
    <property type="protein sequence ID" value="ABB36185.1"/>
    <property type="molecule type" value="Genomic_DNA"/>
</dbReference>
<dbReference type="RefSeq" id="WP_011365381.1">
    <property type="nucleotide sequence ID" value="NC_007516.1"/>
</dbReference>
<dbReference type="SMR" id="Q3AGU7"/>
<dbReference type="STRING" id="110662.Syncc9605_2453"/>
<dbReference type="KEGG" id="syd:Syncc9605_2453"/>
<dbReference type="eggNOG" id="COG0486">
    <property type="taxonomic scope" value="Bacteria"/>
</dbReference>
<dbReference type="HOGENOM" id="CLU_019624_4_1_3"/>
<dbReference type="OrthoDB" id="9805918at2"/>
<dbReference type="GO" id="GO:0005829">
    <property type="term" value="C:cytosol"/>
    <property type="evidence" value="ECO:0007669"/>
    <property type="project" value="TreeGrafter"/>
</dbReference>
<dbReference type="GO" id="GO:0005525">
    <property type="term" value="F:GTP binding"/>
    <property type="evidence" value="ECO:0007669"/>
    <property type="project" value="UniProtKB-UniRule"/>
</dbReference>
<dbReference type="GO" id="GO:0003924">
    <property type="term" value="F:GTPase activity"/>
    <property type="evidence" value="ECO:0007669"/>
    <property type="project" value="UniProtKB-UniRule"/>
</dbReference>
<dbReference type="GO" id="GO:0046872">
    <property type="term" value="F:metal ion binding"/>
    <property type="evidence" value="ECO:0007669"/>
    <property type="project" value="UniProtKB-KW"/>
</dbReference>
<dbReference type="GO" id="GO:0030488">
    <property type="term" value="P:tRNA methylation"/>
    <property type="evidence" value="ECO:0007669"/>
    <property type="project" value="TreeGrafter"/>
</dbReference>
<dbReference type="GO" id="GO:0002098">
    <property type="term" value="P:tRNA wobble uridine modification"/>
    <property type="evidence" value="ECO:0007669"/>
    <property type="project" value="TreeGrafter"/>
</dbReference>
<dbReference type="CDD" id="cd04164">
    <property type="entry name" value="trmE"/>
    <property type="match status" value="1"/>
</dbReference>
<dbReference type="CDD" id="cd14858">
    <property type="entry name" value="TrmE_N"/>
    <property type="match status" value="1"/>
</dbReference>
<dbReference type="Gene3D" id="3.40.50.300">
    <property type="entry name" value="P-loop containing nucleotide triphosphate hydrolases"/>
    <property type="match status" value="1"/>
</dbReference>
<dbReference type="Gene3D" id="3.30.1360.120">
    <property type="entry name" value="Probable tRNA modification gtpase trme, domain 1"/>
    <property type="match status" value="1"/>
</dbReference>
<dbReference type="Gene3D" id="1.20.120.430">
    <property type="entry name" value="tRNA modification GTPase MnmE domain 2"/>
    <property type="match status" value="1"/>
</dbReference>
<dbReference type="HAMAP" id="MF_00379">
    <property type="entry name" value="GTPase_MnmE"/>
    <property type="match status" value="1"/>
</dbReference>
<dbReference type="InterPro" id="IPR031168">
    <property type="entry name" value="G_TrmE"/>
</dbReference>
<dbReference type="InterPro" id="IPR006073">
    <property type="entry name" value="GTP-bd"/>
</dbReference>
<dbReference type="InterPro" id="IPR018948">
    <property type="entry name" value="GTP-bd_TrmE_N"/>
</dbReference>
<dbReference type="InterPro" id="IPR004520">
    <property type="entry name" value="GTPase_MnmE"/>
</dbReference>
<dbReference type="InterPro" id="IPR027368">
    <property type="entry name" value="MnmE_dom2"/>
</dbReference>
<dbReference type="InterPro" id="IPR025867">
    <property type="entry name" value="MnmE_helical"/>
</dbReference>
<dbReference type="InterPro" id="IPR027417">
    <property type="entry name" value="P-loop_NTPase"/>
</dbReference>
<dbReference type="InterPro" id="IPR005225">
    <property type="entry name" value="Small_GTP-bd"/>
</dbReference>
<dbReference type="InterPro" id="IPR027266">
    <property type="entry name" value="TrmE/GcvT_dom1"/>
</dbReference>
<dbReference type="NCBIfam" id="TIGR00450">
    <property type="entry name" value="mnmE_trmE_thdF"/>
    <property type="match status" value="1"/>
</dbReference>
<dbReference type="NCBIfam" id="NF003661">
    <property type="entry name" value="PRK05291.1-3"/>
    <property type="match status" value="1"/>
</dbReference>
<dbReference type="NCBIfam" id="TIGR00231">
    <property type="entry name" value="small_GTP"/>
    <property type="match status" value="1"/>
</dbReference>
<dbReference type="PANTHER" id="PTHR42714">
    <property type="entry name" value="TRNA MODIFICATION GTPASE GTPBP3"/>
    <property type="match status" value="1"/>
</dbReference>
<dbReference type="PANTHER" id="PTHR42714:SF2">
    <property type="entry name" value="TRNA MODIFICATION GTPASE GTPBP3, MITOCHONDRIAL"/>
    <property type="match status" value="1"/>
</dbReference>
<dbReference type="Pfam" id="PF01926">
    <property type="entry name" value="MMR_HSR1"/>
    <property type="match status" value="1"/>
</dbReference>
<dbReference type="Pfam" id="PF12631">
    <property type="entry name" value="MnmE_helical"/>
    <property type="match status" value="1"/>
</dbReference>
<dbReference type="Pfam" id="PF10396">
    <property type="entry name" value="TrmE_N"/>
    <property type="match status" value="1"/>
</dbReference>
<dbReference type="PRINTS" id="PR00449">
    <property type="entry name" value="RASTRNSFRMNG"/>
</dbReference>
<dbReference type="SUPFAM" id="SSF52540">
    <property type="entry name" value="P-loop containing nucleoside triphosphate hydrolases"/>
    <property type="match status" value="1"/>
</dbReference>
<dbReference type="SUPFAM" id="SSF116878">
    <property type="entry name" value="TrmE connector domain"/>
    <property type="match status" value="1"/>
</dbReference>
<dbReference type="PROSITE" id="PS51709">
    <property type="entry name" value="G_TRME"/>
    <property type="match status" value="1"/>
</dbReference>
<proteinExistence type="inferred from homology"/>
<sequence>MPSTDTIAAVATAVAPGQGGIAVIRLSGPAAEATGRSVVHCPGRQEWGSHRVVYGHVIDSEGRRLDEVLLLLMRGPRSFTGEDVVEIHCHGGVIAVQRVLEKVLRQPGVRRAQPGEFSQRAVLNGRLDLTRAEAVSELVAARSRRAAELAMAGLDGGIQAEITVLRERLLDQLTELEARVDFEEDLPPLDGEALLQQLQAVRLELQQLVRDGERGDALRQGLRVALVGRPNVGKSSLLNRLSRRERAIVTDLPGTTRDLLESEIVLEGVPITLLDTAGIRSTDDAVEQLGIARSEQALATADVVLLVLDGHAGWTAEDAALLARIPAQIPRILVANKADLPAGAFPQPVDVQLSALEGMGEADLVQALLERCGAAGTDGMLVALNQRQRDLAARAAEALARSQEVAAQQLPWDFWTIDLREAIRALGEITGEELTEAVLDRVFSRFCIGK</sequence>
<protein>
    <recommendedName>
        <fullName evidence="1">tRNA modification GTPase MnmE</fullName>
        <ecNumber evidence="1">3.6.-.-</ecNumber>
    </recommendedName>
</protein>
<comment type="function">
    <text evidence="1">Exhibits a very high intrinsic GTPase hydrolysis rate. Involved in the addition of a carboxymethylaminomethyl (cmnm) group at the wobble position (U34) of certain tRNAs, forming tRNA-cmnm(5)s(2)U34.</text>
</comment>
<comment type="cofactor">
    <cofactor evidence="1">
        <name>K(+)</name>
        <dbReference type="ChEBI" id="CHEBI:29103"/>
    </cofactor>
    <text evidence="1">Binds 1 potassium ion per subunit.</text>
</comment>
<comment type="subunit">
    <text evidence="1">Homodimer. Heterotetramer of two MnmE and two MnmG subunits.</text>
</comment>
<comment type="subcellular location">
    <subcellularLocation>
        <location evidence="1">Cytoplasm</location>
    </subcellularLocation>
</comment>
<comment type="similarity">
    <text evidence="1">Belongs to the TRAFAC class TrmE-Era-EngA-EngB-Septin-like GTPase superfamily. TrmE GTPase family.</text>
</comment>
<evidence type="ECO:0000255" key="1">
    <source>
        <dbReference type="HAMAP-Rule" id="MF_00379"/>
    </source>
</evidence>
<feature type="chain" id="PRO_1000048899" description="tRNA modification GTPase MnmE">
    <location>
        <begin position="1"/>
        <end position="450"/>
    </location>
</feature>
<feature type="domain" description="TrmE-type G">
    <location>
        <begin position="221"/>
        <end position="373"/>
    </location>
</feature>
<feature type="binding site" evidence="1">
    <location>
        <position position="25"/>
    </location>
    <ligand>
        <name>(6S)-5-formyl-5,6,7,8-tetrahydrofolate</name>
        <dbReference type="ChEBI" id="CHEBI:57457"/>
    </ligand>
</feature>
<feature type="binding site" evidence="1">
    <location>
        <position position="86"/>
    </location>
    <ligand>
        <name>(6S)-5-formyl-5,6,7,8-tetrahydrofolate</name>
        <dbReference type="ChEBI" id="CHEBI:57457"/>
    </ligand>
</feature>
<feature type="binding site" evidence="1">
    <location>
        <position position="126"/>
    </location>
    <ligand>
        <name>(6S)-5-formyl-5,6,7,8-tetrahydrofolate</name>
        <dbReference type="ChEBI" id="CHEBI:57457"/>
    </ligand>
</feature>
<feature type="binding site" evidence="1">
    <location>
        <begin position="231"/>
        <end position="236"/>
    </location>
    <ligand>
        <name>GTP</name>
        <dbReference type="ChEBI" id="CHEBI:37565"/>
    </ligand>
</feature>
<feature type="binding site" evidence="1">
    <location>
        <position position="231"/>
    </location>
    <ligand>
        <name>K(+)</name>
        <dbReference type="ChEBI" id="CHEBI:29103"/>
    </ligand>
</feature>
<feature type="binding site" evidence="1">
    <location>
        <position position="235"/>
    </location>
    <ligand>
        <name>Mg(2+)</name>
        <dbReference type="ChEBI" id="CHEBI:18420"/>
    </ligand>
</feature>
<feature type="binding site" evidence="1">
    <location>
        <begin position="250"/>
        <end position="256"/>
    </location>
    <ligand>
        <name>GTP</name>
        <dbReference type="ChEBI" id="CHEBI:37565"/>
    </ligand>
</feature>
<feature type="binding site" evidence="1">
    <location>
        <position position="250"/>
    </location>
    <ligand>
        <name>K(+)</name>
        <dbReference type="ChEBI" id="CHEBI:29103"/>
    </ligand>
</feature>
<feature type="binding site" evidence="1">
    <location>
        <position position="252"/>
    </location>
    <ligand>
        <name>K(+)</name>
        <dbReference type="ChEBI" id="CHEBI:29103"/>
    </ligand>
</feature>
<feature type="binding site" evidence="1">
    <location>
        <position position="255"/>
    </location>
    <ligand>
        <name>K(+)</name>
        <dbReference type="ChEBI" id="CHEBI:29103"/>
    </ligand>
</feature>
<feature type="binding site" evidence="1">
    <location>
        <position position="256"/>
    </location>
    <ligand>
        <name>Mg(2+)</name>
        <dbReference type="ChEBI" id="CHEBI:18420"/>
    </ligand>
</feature>
<feature type="binding site" evidence="1">
    <location>
        <begin position="275"/>
        <end position="278"/>
    </location>
    <ligand>
        <name>GTP</name>
        <dbReference type="ChEBI" id="CHEBI:37565"/>
    </ligand>
</feature>
<feature type="binding site" evidence="1">
    <location>
        <begin position="336"/>
        <end position="339"/>
    </location>
    <ligand>
        <name>GTP</name>
        <dbReference type="ChEBI" id="CHEBI:37565"/>
    </ligand>
</feature>
<feature type="binding site" evidence="1">
    <location>
        <position position="450"/>
    </location>
    <ligand>
        <name>(6S)-5-formyl-5,6,7,8-tetrahydrofolate</name>
        <dbReference type="ChEBI" id="CHEBI:57457"/>
    </ligand>
</feature>
<gene>
    <name evidence="1" type="primary">mnmE</name>
    <name evidence="1" type="synonym">trmE</name>
    <name type="ordered locus">Syncc9605_2453</name>
</gene>
<organism>
    <name type="scientific">Synechococcus sp. (strain CC9605)</name>
    <dbReference type="NCBI Taxonomy" id="110662"/>
    <lineage>
        <taxon>Bacteria</taxon>
        <taxon>Bacillati</taxon>
        <taxon>Cyanobacteriota</taxon>
        <taxon>Cyanophyceae</taxon>
        <taxon>Synechococcales</taxon>
        <taxon>Synechococcaceae</taxon>
        <taxon>Synechococcus</taxon>
    </lineage>
</organism>
<keyword id="KW-0963">Cytoplasm</keyword>
<keyword id="KW-0342">GTP-binding</keyword>
<keyword id="KW-0378">Hydrolase</keyword>
<keyword id="KW-0460">Magnesium</keyword>
<keyword id="KW-0479">Metal-binding</keyword>
<keyword id="KW-0547">Nucleotide-binding</keyword>
<keyword id="KW-0630">Potassium</keyword>
<keyword id="KW-0819">tRNA processing</keyword>